<protein>
    <recommendedName>
        <fullName evidence="1">Heat-inducible transcription repressor HrcA</fullName>
    </recommendedName>
</protein>
<name>HRCA_OCEIH</name>
<organism>
    <name type="scientific">Oceanobacillus iheyensis (strain DSM 14371 / CIP 107618 / JCM 11309 / KCTC 3954 / HTE831)</name>
    <dbReference type="NCBI Taxonomy" id="221109"/>
    <lineage>
        <taxon>Bacteria</taxon>
        <taxon>Bacillati</taxon>
        <taxon>Bacillota</taxon>
        <taxon>Bacilli</taxon>
        <taxon>Bacillales</taxon>
        <taxon>Bacillaceae</taxon>
        <taxon>Oceanobacillus</taxon>
    </lineage>
</organism>
<proteinExistence type="inferred from homology"/>
<sequence length="342" mass="38658">MLTERQLIILQVIIDDFIETAHPIGSRALSKSEYLPYSAATIRNEMADLEDLGFLEKTHTSSGRIPSEKGYRYYVDHLIGPMNQHEAGILRKYTDGEFFEFEQVVQMTAEVLSELTNYTSIILGPEMFEATLKQIQVLTLSDHTAVAILVTSTGHVEHRSFALPEGIASSDLEKLVNILNDRLKGVPIIRLGEVISTEVAQLMHRYMDDFEASFDLLRAFFMNEHPVKLYFGGKSNILMQPEFNDVDKIRSFYALIEQEDEIANLLKNTHQGIKVSIGNENKVEAIKDLSLITASYHVGDNLMGTIALLGPTRMEYKKVISLMKGISDEMTNTLDRWYKGDS</sequence>
<accession>Q8EPW3</accession>
<feature type="chain" id="PRO_0000182516" description="Heat-inducible transcription repressor HrcA">
    <location>
        <begin position="1"/>
        <end position="342"/>
    </location>
</feature>
<evidence type="ECO:0000255" key="1">
    <source>
        <dbReference type="HAMAP-Rule" id="MF_00081"/>
    </source>
</evidence>
<comment type="function">
    <text evidence="1">Negative regulator of class I heat shock genes (grpE-dnaK-dnaJ and groELS operons). Prevents heat-shock induction of these operons.</text>
</comment>
<comment type="similarity">
    <text evidence="1">Belongs to the HrcA family.</text>
</comment>
<reference key="1">
    <citation type="journal article" date="2002" name="Nucleic Acids Res.">
        <title>Genome sequence of Oceanobacillus iheyensis isolated from the Iheya Ridge and its unexpected adaptive capabilities to extreme environments.</title>
        <authorList>
            <person name="Takami H."/>
            <person name="Takaki Y."/>
            <person name="Uchiyama I."/>
        </authorList>
    </citation>
    <scope>NUCLEOTIDE SEQUENCE [LARGE SCALE GENOMIC DNA]</scope>
    <source>
        <strain>DSM 14371 / CIP 107618 / JCM 11309 / KCTC 3954 / HTE831</strain>
    </source>
</reference>
<dbReference type="EMBL" id="BA000028">
    <property type="protein sequence ID" value="BAC13926.1"/>
    <property type="molecule type" value="Genomic_DNA"/>
</dbReference>
<dbReference type="RefSeq" id="WP_011066367.1">
    <property type="nucleotide sequence ID" value="NC_004193.1"/>
</dbReference>
<dbReference type="SMR" id="Q8EPW3"/>
<dbReference type="STRING" id="221109.gene:10734216"/>
<dbReference type="KEGG" id="oih:OB1970"/>
<dbReference type="eggNOG" id="COG1420">
    <property type="taxonomic scope" value="Bacteria"/>
</dbReference>
<dbReference type="HOGENOM" id="CLU_050019_1_0_9"/>
<dbReference type="OrthoDB" id="9783139at2"/>
<dbReference type="PhylomeDB" id="Q8EPW3"/>
<dbReference type="Proteomes" id="UP000000822">
    <property type="component" value="Chromosome"/>
</dbReference>
<dbReference type="GO" id="GO:0003677">
    <property type="term" value="F:DNA binding"/>
    <property type="evidence" value="ECO:0007669"/>
    <property type="project" value="InterPro"/>
</dbReference>
<dbReference type="GO" id="GO:0045892">
    <property type="term" value="P:negative regulation of DNA-templated transcription"/>
    <property type="evidence" value="ECO:0007669"/>
    <property type="project" value="UniProtKB-UniRule"/>
</dbReference>
<dbReference type="FunFam" id="1.10.10.10:FF:000049">
    <property type="entry name" value="Heat-inducible transcription repressor HrcA"/>
    <property type="match status" value="1"/>
</dbReference>
<dbReference type="Gene3D" id="3.30.450.40">
    <property type="match status" value="1"/>
</dbReference>
<dbReference type="Gene3D" id="3.30.390.60">
    <property type="entry name" value="Heat-inducible transcription repressor hrca homolog, domain 3"/>
    <property type="match status" value="1"/>
</dbReference>
<dbReference type="Gene3D" id="1.10.10.10">
    <property type="entry name" value="Winged helix-like DNA-binding domain superfamily/Winged helix DNA-binding domain"/>
    <property type="match status" value="1"/>
</dbReference>
<dbReference type="HAMAP" id="MF_00081">
    <property type="entry name" value="HrcA"/>
    <property type="match status" value="1"/>
</dbReference>
<dbReference type="InterPro" id="IPR029016">
    <property type="entry name" value="GAF-like_dom_sf"/>
</dbReference>
<dbReference type="InterPro" id="IPR002571">
    <property type="entry name" value="HrcA"/>
</dbReference>
<dbReference type="InterPro" id="IPR021153">
    <property type="entry name" value="HrcA_C"/>
</dbReference>
<dbReference type="InterPro" id="IPR036388">
    <property type="entry name" value="WH-like_DNA-bd_sf"/>
</dbReference>
<dbReference type="InterPro" id="IPR036390">
    <property type="entry name" value="WH_DNA-bd_sf"/>
</dbReference>
<dbReference type="InterPro" id="IPR023120">
    <property type="entry name" value="WHTH_transcript_rep_HrcA_IDD"/>
</dbReference>
<dbReference type="NCBIfam" id="TIGR00331">
    <property type="entry name" value="hrcA"/>
    <property type="match status" value="1"/>
</dbReference>
<dbReference type="PANTHER" id="PTHR34824">
    <property type="entry name" value="HEAT-INDUCIBLE TRANSCRIPTION REPRESSOR HRCA"/>
    <property type="match status" value="1"/>
</dbReference>
<dbReference type="PANTHER" id="PTHR34824:SF1">
    <property type="entry name" value="HEAT-INDUCIBLE TRANSCRIPTION REPRESSOR HRCA"/>
    <property type="match status" value="1"/>
</dbReference>
<dbReference type="Pfam" id="PF01628">
    <property type="entry name" value="HrcA"/>
    <property type="match status" value="1"/>
</dbReference>
<dbReference type="PIRSF" id="PIRSF005485">
    <property type="entry name" value="HrcA"/>
    <property type="match status" value="1"/>
</dbReference>
<dbReference type="SUPFAM" id="SSF55781">
    <property type="entry name" value="GAF domain-like"/>
    <property type="match status" value="1"/>
</dbReference>
<dbReference type="SUPFAM" id="SSF46785">
    <property type="entry name" value="Winged helix' DNA-binding domain"/>
    <property type="match status" value="1"/>
</dbReference>
<gene>
    <name evidence="1" type="primary">hrcA</name>
    <name type="ordered locus">OB1970</name>
</gene>
<keyword id="KW-1185">Reference proteome</keyword>
<keyword id="KW-0678">Repressor</keyword>
<keyword id="KW-0346">Stress response</keyword>
<keyword id="KW-0804">Transcription</keyword>
<keyword id="KW-0805">Transcription regulation</keyword>